<dbReference type="EMBL" id="AE006468">
    <property type="protein sequence ID" value="AAL21719.1"/>
    <property type="molecule type" value="Genomic_DNA"/>
</dbReference>
<dbReference type="RefSeq" id="WP_000010814.1">
    <property type="nucleotide sequence ID" value="NC_003197.2"/>
</dbReference>
<dbReference type="SMR" id="Q8ZMJ8"/>
<dbReference type="STRING" id="99287.STM2839"/>
<dbReference type="PaxDb" id="99287-STM2839"/>
<dbReference type="KEGG" id="stm:STM2839"/>
<dbReference type="PATRIC" id="fig|99287.12.peg.2993"/>
<dbReference type="HOGENOM" id="CLU_000445_125_2_6"/>
<dbReference type="OMA" id="LRYEAHQ"/>
<dbReference type="PhylomeDB" id="Q8ZMJ8"/>
<dbReference type="BioCyc" id="SENT99287:STM2839-MONOMER"/>
<dbReference type="UniPathway" id="UPA00638"/>
<dbReference type="Proteomes" id="UP000001014">
    <property type="component" value="Chromosome"/>
</dbReference>
<dbReference type="GO" id="GO:0032993">
    <property type="term" value="C:protein-DNA complex"/>
    <property type="evidence" value="ECO:0000318"/>
    <property type="project" value="GO_Central"/>
</dbReference>
<dbReference type="GO" id="GO:0005524">
    <property type="term" value="F:ATP binding"/>
    <property type="evidence" value="ECO:0007669"/>
    <property type="project" value="UniProtKB-UniRule"/>
</dbReference>
<dbReference type="GO" id="GO:0016887">
    <property type="term" value="F:ATP hydrolysis activity"/>
    <property type="evidence" value="ECO:0007669"/>
    <property type="project" value="InterPro"/>
</dbReference>
<dbReference type="GO" id="GO:0000987">
    <property type="term" value="F:cis-regulatory region sequence-specific DNA binding"/>
    <property type="evidence" value="ECO:0000318"/>
    <property type="project" value="GO_Central"/>
</dbReference>
<dbReference type="GO" id="GO:0001216">
    <property type="term" value="F:DNA-binding transcription activator activity"/>
    <property type="evidence" value="ECO:0000318"/>
    <property type="project" value="GO_Central"/>
</dbReference>
<dbReference type="GO" id="GO:0000160">
    <property type="term" value="P:phosphorelay signal transduction system"/>
    <property type="evidence" value="ECO:0007669"/>
    <property type="project" value="UniProtKB-UniRule"/>
</dbReference>
<dbReference type="GO" id="GO:0045893">
    <property type="term" value="P:positive regulation of DNA-templated transcription"/>
    <property type="evidence" value="ECO:0000318"/>
    <property type="project" value="GO_Central"/>
</dbReference>
<dbReference type="CDD" id="cd00009">
    <property type="entry name" value="AAA"/>
    <property type="match status" value="1"/>
</dbReference>
<dbReference type="FunFam" id="1.10.8.60:FF:000045">
    <property type="entry name" value="Anaerobic nitric oxide reductase transcription regulator NorR"/>
    <property type="match status" value="1"/>
</dbReference>
<dbReference type="FunFam" id="3.30.450.40:FF:000021">
    <property type="entry name" value="Anaerobic nitric oxide reductase transcription regulator NorR"/>
    <property type="match status" value="1"/>
</dbReference>
<dbReference type="FunFam" id="3.40.50.300:FF:000006">
    <property type="entry name" value="DNA-binding transcriptional regulator NtrC"/>
    <property type="match status" value="1"/>
</dbReference>
<dbReference type="Gene3D" id="1.10.8.60">
    <property type="match status" value="1"/>
</dbReference>
<dbReference type="Gene3D" id="3.30.450.40">
    <property type="match status" value="1"/>
</dbReference>
<dbReference type="Gene3D" id="1.10.10.60">
    <property type="entry name" value="Homeodomain-like"/>
    <property type="match status" value="1"/>
</dbReference>
<dbReference type="Gene3D" id="3.40.50.300">
    <property type="entry name" value="P-loop containing nucleotide triphosphate hydrolases"/>
    <property type="match status" value="1"/>
</dbReference>
<dbReference type="HAMAP" id="MF_01314">
    <property type="entry name" value="NorR"/>
    <property type="match status" value="1"/>
</dbReference>
<dbReference type="InterPro" id="IPR003593">
    <property type="entry name" value="AAA+_ATPase"/>
</dbReference>
<dbReference type="InterPro" id="IPR003018">
    <property type="entry name" value="GAF"/>
</dbReference>
<dbReference type="InterPro" id="IPR029016">
    <property type="entry name" value="GAF-like_dom_sf"/>
</dbReference>
<dbReference type="InterPro" id="IPR009057">
    <property type="entry name" value="Homeodomain-like_sf"/>
</dbReference>
<dbReference type="InterPro" id="IPR023944">
    <property type="entry name" value="NorR"/>
</dbReference>
<dbReference type="InterPro" id="IPR027417">
    <property type="entry name" value="P-loop_NTPase"/>
</dbReference>
<dbReference type="InterPro" id="IPR002078">
    <property type="entry name" value="Sigma_54_int"/>
</dbReference>
<dbReference type="InterPro" id="IPR025662">
    <property type="entry name" value="Sigma_54_int_dom_ATP-bd_1"/>
</dbReference>
<dbReference type="InterPro" id="IPR025943">
    <property type="entry name" value="Sigma_54_int_dom_ATP-bd_2"/>
</dbReference>
<dbReference type="InterPro" id="IPR025944">
    <property type="entry name" value="Sigma_54_int_dom_CS"/>
</dbReference>
<dbReference type="NCBIfam" id="NF003451">
    <property type="entry name" value="PRK05022.1"/>
    <property type="match status" value="1"/>
</dbReference>
<dbReference type="PANTHER" id="PTHR32071:SF35">
    <property type="entry name" value="ANAEROBIC NITRIC OXIDE REDUCTASE TRANSCRIPTION REGULATOR NORR"/>
    <property type="match status" value="1"/>
</dbReference>
<dbReference type="PANTHER" id="PTHR32071">
    <property type="entry name" value="TRANSCRIPTIONAL REGULATORY PROTEIN"/>
    <property type="match status" value="1"/>
</dbReference>
<dbReference type="Pfam" id="PF01590">
    <property type="entry name" value="GAF"/>
    <property type="match status" value="1"/>
</dbReference>
<dbReference type="Pfam" id="PF00158">
    <property type="entry name" value="Sigma54_activat"/>
    <property type="match status" value="1"/>
</dbReference>
<dbReference type="SMART" id="SM00382">
    <property type="entry name" value="AAA"/>
    <property type="match status" value="1"/>
</dbReference>
<dbReference type="SMART" id="SM00065">
    <property type="entry name" value="GAF"/>
    <property type="match status" value="1"/>
</dbReference>
<dbReference type="SUPFAM" id="SSF55781">
    <property type="entry name" value="GAF domain-like"/>
    <property type="match status" value="1"/>
</dbReference>
<dbReference type="SUPFAM" id="SSF46689">
    <property type="entry name" value="Homeodomain-like"/>
    <property type="match status" value="1"/>
</dbReference>
<dbReference type="SUPFAM" id="SSF52540">
    <property type="entry name" value="P-loop containing nucleoside triphosphate hydrolases"/>
    <property type="match status" value="1"/>
</dbReference>
<dbReference type="PROSITE" id="PS00675">
    <property type="entry name" value="SIGMA54_INTERACT_1"/>
    <property type="match status" value="1"/>
</dbReference>
<dbReference type="PROSITE" id="PS00676">
    <property type="entry name" value="SIGMA54_INTERACT_2"/>
    <property type="match status" value="1"/>
</dbReference>
<dbReference type="PROSITE" id="PS00688">
    <property type="entry name" value="SIGMA54_INTERACT_3"/>
    <property type="match status" value="1"/>
</dbReference>
<dbReference type="PROSITE" id="PS50045">
    <property type="entry name" value="SIGMA54_INTERACT_4"/>
    <property type="match status" value="1"/>
</dbReference>
<reference key="1">
    <citation type="journal article" date="2001" name="Nature">
        <title>Complete genome sequence of Salmonella enterica serovar Typhimurium LT2.</title>
        <authorList>
            <person name="McClelland M."/>
            <person name="Sanderson K.E."/>
            <person name="Spieth J."/>
            <person name="Clifton S.W."/>
            <person name="Latreille P."/>
            <person name="Courtney L."/>
            <person name="Porwollik S."/>
            <person name="Ali J."/>
            <person name="Dante M."/>
            <person name="Du F."/>
            <person name="Hou S."/>
            <person name="Layman D."/>
            <person name="Leonard S."/>
            <person name="Nguyen C."/>
            <person name="Scott K."/>
            <person name="Holmes A."/>
            <person name="Grewal N."/>
            <person name="Mulvaney E."/>
            <person name="Ryan E."/>
            <person name="Sun H."/>
            <person name="Florea L."/>
            <person name="Miller W."/>
            <person name="Stoneking T."/>
            <person name="Nhan M."/>
            <person name="Waterston R."/>
            <person name="Wilson R.K."/>
        </authorList>
    </citation>
    <scope>NUCLEOTIDE SEQUENCE [LARGE SCALE GENOMIC DNA]</scope>
    <source>
        <strain>LT2 / SGSC1412 / ATCC 700720</strain>
    </source>
</reference>
<accession>Q8ZMJ8</accession>
<protein>
    <recommendedName>
        <fullName evidence="1">Anaerobic nitric oxide reductase transcription regulator NorR</fullName>
    </recommendedName>
</protein>
<comment type="function">
    <text evidence="1">Required for the expression of anaerobic nitric oxide (NO) reductase, acts as a transcriptional activator for at least the norVW operon. Activation also requires sigma-54.</text>
</comment>
<comment type="pathway">
    <text evidence="1">Nitrogen metabolism; nitric oxide reduction.</text>
</comment>
<keyword id="KW-0067">ATP-binding</keyword>
<keyword id="KW-0238">DNA-binding</keyword>
<keyword id="KW-0547">Nucleotide-binding</keyword>
<keyword id="KW-0597">Phosphoprotein</keyword>
<keyword id="KW-1185">Reference proteome</keyword>
<keyword id="KW-0804">Transcription</keyword>
<keyword id="KW-0805">Transcription regulation</keyword>
<gene>
    <name evidence="1" type="primary">norR</name>
    <name type="ordered locus">STM2839</name>
</gene>
<organism>
    <name type="scientific">Salmonella typhimurium (strain LT2 / SGSC1412 / ATCC 700720)</name>
    <dbReference type="NCBI Taxonomy" id="99287"/>
    <lineage>
        <taxon>Bacteria</taxon>
        <taxon>Pseudomonadati</taxon>
        <taxon>Pseudomonadota</taxon>
        <taxon>Gammaproteobacteria</taxon>
        <taxon>Enterobacterales</taxon>
        <taxon>Enterobacteriaceae</taxon>
        <taxon>Salmonella</taxon>
    </lineage>
</organism>
<proteinExistence type="inferred from homology"/>
<feature type="chain" id="PRO_0000081157" description="Anaerobic nitric oxide reductase transcription regulator NorR">
    <location>
        <begin position="1"/>
        <end position="506"/>
    </location>
</feature>
<feature type="domain" description="Sigma-54 factor interaction" evidence="1">
    <location>
        <begin position="187"/>
        <end position="416"/>
    </location>
</feature>
<feature type="DNA-binding region" description="H-T-H motif" evidence="1">
    <location>
        <begin position="481"/>
        <end position="500"/>
    </location>
</feature>
<feature type="binding site" evidence="1">
    <location>
        <begin position="215"/>
        <end position="222"/>
    </location>
    <ligand>
        <name>ATP</name>
        <dbReference type="ChEBI" id="CHEBI:30616"/>
    </ligand>
</feature>
<feature type="binding site" evidence="1">
    <location>
        <begin position="278"/>
        <end position="287"/>
    </location>
    <ligand>
        <name>ATP</name>
        <dbReference type="ChEBI" id="CHEBI:30616"/>
    </ligand>
</feature>
<feature type="modified residue" description="4-aspartylphosphate" evidence="1">
    <location>
        <position position="57"/>
    </location>
</feature>
<name>NORR_SALTY</name>
<sequence length="506" mass="55375">MSFSVEVLAGIAIELQRGIGHQDRFQRLITTLRQVLACDASALLRYESRQFIPLAIDGLAQDVLGRRFTLEGHPRLEAIARAGDVVRFPADSDLPDPYDGLIPGQESLKVHACVGLPLFAGQNLIGALTLDAMTPEQFEVFSDEELRLVAALAAGALSNALLIEQLESQNMLPGSSGVFEPIKETHMIGLSPAMTQLKKEIEIVAGSDLNVLIGGETGTGKELVAKAIHQGSPRAVNPLVYLNCAALPESVAESELFGHVKGAFTGAISNRSGKFEMADNGTLFLDEIGELSLALQAKLLRVLQYGDIQRVGDDRSLRVDVRVLAATNRDLREEVLAGRFRADLFHRLSVFPLFVPPLRERGDDVVLLAGYFCEQCRLRLGLSRVVLSPGARRHLLNYGWPGNVRELEHAIHRAVVLARATRAGDEVILEAQHFALSEDVLPAPPAESFLALPTCRNLRESTENFQREMIRQALAQNNHNWAASARALETDVANLHRLAKRLGLKD</sequence>
<evidence type="ECO:0000255" key="1">
    <source>
        <dbReference type="HAMAP-Rule" id="MF_01314"/>
    </source>
</evidence>